<gene>
    <name type="primary">CAB40</name>
</gene>
<comment type="function">
    <text>The light-harvesting complex (LHC) functions as a light receptor, it captures and delivers excitation energy to photosystems with which it is closely associated.</text>
</comment>
<comment type="cofactor">
    <text evidence="1">Binds at least 14 chlorophylls (8 Chl-a and 6 Chl-b) and carotenoids such as lutein and neoxanthin.</text>
</comment>
<comment type="subunit">
    <text>The LHC complex consists of chlorophyll a-b binding proteins.</text>
</comment>
<comment type="subcellular location">
    <subcellularLocation>
        <location>Plastid</location>
        <location>Chloroplast thylakoid membrane</location>
        <topology>Multi-pass membrane protein</topology>
    </subcellularLocation>
</comment>
<comment type="domain">
    <text>The N-terminus of the protein extends into the stroma where it is involved with adhesion of granal membranes and post-translational modifications; both are believed to mediate the distribution of excitation energy between photosystems I and II.</text>
</comment>
<comment type="PTM">
    <text evidence="1">Photoregulated by reversible phosphorylation of its threonine residues.</text>
</comment>
<comment type="similarity">
    <text evidence="5">Belongs to the light-harvesting chlorophyll a/b-binding (LHC) protein family.</text>
</comment>
<evidence type="ECO:0000250" key="1"/>
<evidence type="ECO:0000250" key="2">
    <source>
        <dbReference type="UniProtKB" id="P07371"/>
    </source>
</evidence>
<evidence type="ECO:0000250" key="3">
    <source>
        <dbReference type="UniProtKB" id="P12333"/>
    </source>
</evidence>
<evidence type="ECO:0000255" key="4"/>
<evidence type="ECO:0000305" key="5"/>
<sequence length="267" mass="28297">MAASTMALSSPSFAGKAVKLSPSSSEITGNGKVTMRKTASKAKTVSSGSPWYGPDRVKYLGPFSGESPSYLTGEFPGDYGWDTAGLSADPETFAKNRELEVIHCRWAMLGALGCVFPELLARNGVKFGEAVWFKAGSQIFSEGGLDYLGNPSLVHAQSILAIWACQVVLMGAVEGYRVAGGPLGEVVDPLYPGGSFDPLGLAEDPEAFAELKVKEIKNGRLAMFSMFGFFVQAIVTGKGPLENLADHLADPVNNNAWAYATNFVPGK</sequence>
<name>CB24_TOBAC</name>
<proteinExistence type="evidence at transcript level"/>
<feature type="transit peptide" description="Chloroplast" evidence="4">
    <location>
        <begin position="1"/>
        <end position="35"/>
    </location>
</feature>
<feature type="chain" id="PRO_0000003705" description="Chlorophyll a-b binding protein 40, chloroplastic">
    <location>
        <begin position="36"/>
        <end position="267"/>
    </location>
</feature>
<feature type="transmembrane region" description="Helical" evidence="4">
    <location>
        <begin position="101"/>
        <end position="121"/>
    </location>
</feature>
<feature type="transmembrane region" description="Helical" evidence="4">
    <location>
        <begin position="153"/>
        <end position="173"/>
    </location>
</feature>
<feature type="transmembrane region" description="Helical" evidence="4">
    <location>
        <begin position="221"/>
        <end position="241"/>
    </location>
</feature>
<feature type="binding site" description="axial binding residue" evidence="3">
    <location>
        <position position="59"/>
    </location>
    <ligand>
        <name>chlorophyll b</name>
        <dbReference type="ChEBI" id="CHEBI:61721"/>
        <label>1</label>
    </ligand>
    <ligandPart>
        <name>Mg</name>
        <dbReference type="ChEBI" id="CHEBI:25107"/>
    </ligandPart>
</feature>
<feature type="binding site" evidence="1">
    <location>
        <position position="81"/>
    </location>
    <ligand>
        <name>chlorophyll a</name>
        <dbReference type="ChEBI" id="CHEBI:58416"/>
        <label>1</label>
    </ligand>
</feature>
<feature type="binding site" evidence="1">
    <location>
        <position position="87"/>
    </location>
    <ligand>
        <name>chlorophyll a</name>
        <dbReference type="ChEBI" id="CHEBI:58416"/>
        <label>1</label>
    </ligand>
</feature>
<feature type="binding site" description="axial binding residue" evidence="2">
    <location>
        <position position="100"/>
    </location>
    <ligand>
        <name>chlorophyll a</name>
        <dbReference type="ChEBI" id="CHEBI:58416"/>
        <label>1</label>
    </ligand>
    <ligandPart>
        <name>Mg</name>
        <dbReference type="ChEBI" id="CHEBI:25107"/>
    </ligandPart>
</feature>
<feature type="binding site" description="axial binding residue" evidence="2">
    <location>
        <position position="103"/>
    </location>
    <ligand>
        <name>chlorophyll a</name>
        <dbReference type="ChEBI" id="CHEBI:58416"/>
        <label>2</label>
    </ligand>
    <ligandPart>
        <name>Mg</name>
        <dbReference type="ChEBI" id="CHEBI:25107"/>
    </ligandPart>
</feature>
<feature type="binding site" evidence="1">
    <location>
        <position position="105"/>
    </location>
    <ligand>
        <name>chlorophyll b</name>
        <dbReference type="ChEBI" id="CHEBI:61721"/>
        <label>2</label>
    </ligand>
</feature>
<feature type="binding site" evidence="1">
    <location>
        <position position="138"/>
    </location>
    <ligand>
        <name>chlorophyll a</name>
        <dbReference type="ChEBI" id="CHEBI:58416"/>
        <label>3</label>
    </ligand>
</feature>
<feature type="binding site" evidence="1">
    <location>
        <position position="148"/>
    </location>
    <ligand>
        <name>chlorophyll a</name>
        <dbReference type="ChEBI" id="CHEBI:58416"/>
        <label>3</label>
    </ligand>
</feature>
<feature type="binding site" description="axial binding residue" evidence="2">
    <location>
        <position position="154"/>
    </location>
    <ligand>
        <name>chlorophyll b</name>
        <dbReference type="ChEBI" id="CHEBI:61721"/>
        <label>2</label>
    </ligand>
    <ligandPart>
        <name>Mg</name>
        <dbReference type="ChEBI" id="CHEBI:25107"/>
    </ligandPart>
</feature>
<feature type="binding site" evidence="1">
    <location>
        <position position="158"/>
    </location>
    <ligand>
        <name>chlorophyll b</name>
        <dbReference type="ChEBI" id="CHEBI:61721"/>
        <label>3</label>
    </ligand>
</feature>
<feature type="binding site" evidence="1">
    <location>
        <position position="166"/>
    </location>
    <ligand>
        <name>chlorophyll b</name>
        <dbReference type="ChEBI" id="CHEBI:61721"/>
        <label>4</label>
    </ligand>
</feature>
<feature type="binding site" evidence="2">
    <location>
        <position position="166"/>
    </location>
    <ligand>
        <name>chlorophyll b</name>
        <dbReference type="ChEBI" id="CHEBI:61721"/>
        <label>5</label>
    </ligand>
</feature>
<feature type="binding site" description="axial binding residue" evidence="2">
    <location>
        <position position="174"/>
    </location>
    <ligand>
        <name>chlorophyll b</name>
        <dbReference type="ChEBI" id="CHEBI:61721"/>
        <label>3</label>
    </ligand>
    <ligandPart>
        <name>Mg</name>
        <dbReference type="ChEBI" id="CHEBI:25107"/>
    </ligandPart>
</feature>
<feature type="binding site" evidence="1">
    <location>
        <position position="177"/>
    </location>
    <ligand>
        <name>chlorophyll b</name>
        <dbReference type="ChEBI" id="CHEBI:61721"/>
        <label>4</label>
    </ligand>
</feature>
<feature type="binding site" evidence="1">
    <location>
        <position position="183"/>
    </location>
    <ligand>
        <name>chlorophyll b</name>
        <dbReference type="ChEBI" id="CHEBI:61721"/>
        <label>2</label>
    </ligand>
</feature>
<feature type="binding site" evidence="1">
    <location>
        <position position="214"/>
    </location>
    <ligand>
        <name>chlorophyll a</name>
        <dbReference type="ChEBI" id="CHEBI:58416"/>
        <label>5</label>
    </ligand>
</feature>
<feature type="binding site" description="axial binding residue" evidence="2">
    <location>
        <position position="215"/>
    </location>
    <ligand>
        <name>chlorophyll a</name>
        <dbReference type="ChEBI" id="CHEBI:58416"/>
        <label>3</label>
    </ligand>
    <ligandPart>
        <name>Mg</name>
        <dbReference type="ChEBI" id="CHEBI:25107"/>
    </ligandPart>
</feature>
<feature type="binding site" description="axial binding residue" evidence="2">
    <location>
        <position position="218"/>
    </location>
    <ligand>
        <name>chlorophyll a</name>
        <dbReference type="ChEBI" id="CHEBI:58416"/>
        <label>4</label>
    </ligand>
    <ligandPart>
        <name>Mg</name>
        <dbReference type="ChEBI" id="CHEBI:25107"/>
    </ligandPart>
</feature>
<feature type="binding site" evidence="1">
    <location>
        <position position="220"/>
    </location>
    <ligand>
        <name>chlorophyll a</name>
        <dbReference type="ChEBI" id="CHEBI:58416"/>
        <label>1</label>
    </ligand>
</feature>
<feature type="binding site" description="axial binding residue" evidence="2">
    <location>
        <position position="232"/>
    </location>
    <ligand>
        <name>chlorophyll a</name>
        <dbReference type="ChEBI" id="CHEBI:58416"/>
        <label>5</label>
    </ligand>
    <ligandPart>
        <name>Mg</name>
        <dbReference type="ChEBI" id="CHEBI:25107"/>
    </ligandPart>
</feature>
<feature type="binding site" description="axial binding residue" evidence="2">
    <location>
        <position position="247"/>
    </location>
    <ligand>
        <name>chlorophyll a</name>
        <dbReference type="ChEBI" id="CHEBI:58416"/>
        <label>6</label>
    </ligand>
    <ligandPart>
        <name>Mg</name>
        <dbReference type="ChEBI" id="CHEBI:25107"/>
    </ligandPart>
</feature>
<feature type="binding site" evidence="1">
    <location>
        <position position="256"/>
    </location>
    <ligand>
        <name>chlorophyll a</name>
        <dbReference type="ChEBI" id="CHEBI:58416"/>
        <label>6</label>
    </ligand>
</feature>
<feature type="binding site" evidence="1">
    <location>
        <position position="263"/>
    </location>
    <ligand>
        <name>chlorophyll b</name>
        <dbReference type="ChEBI" id="CHEBI:61721"/>
        <label>5</label>
    </ligand>
</feature>
<feature type="modified residue" description="N2-acetylarginine" evidence="1">
    <location>
        <position position="36"/>
    </location>
</feature>
<feature type="modified residue" description="Phosphothreonine" evidence="1">
    <location>
        <position position="38"/>
    </location>
</feature>
<protein>
    <recommendedName>
        <fullName>Chlorophyll a-b binding protein 40, chloroplastic</fullName>
    </recommendedName>
    <alternativeName>
        <fullName>LHCII type I CAB-40</fullName>
        <shortName>LHCP</shortName>
    </alternativeName>
</protein>
<reference key="1">
    <citation type="submission" date="1990-04" db="EMBL/GenBank/DDBJ databases">
        <authorList>
            <person name="Jin D.S."/>
            <person name="Bogorad L."/>
        </authorList>
    </citation>
    <scope>NUCLEOTIDE SEQUENCE [MRNA]</scope>
    <source>
        <strain>cv. SR1</strain>
        <tissue>Leaf</tissue>
    </source>
</reference>
<organism>
    <name type="scientific">Nicotiana tabacum</name>
    <name type="common">Common tobacco</name>
    <dbReference type="NCBI Taxonomy" id="4097"/>
    <lineage>
        <taxon>Eukaryota</taxon>
        <taxon>Viridiplantae</taxon>
        <taxon>Streptophyta</taxon>
        <taxon>Embryophyta</taxon>
        <taxon>Tracheophyta</taxon>
        <taxon>Spermatophyta</taxon>
        <taxon>Magnoliopsida</taxon>
        <taxon>eudicotyledons</taxon>
        <taxon>Gunneridae</taxon>
        <taxon>Pentapetalae</taxon>
        <taxon>asterids</taxon>
        <taxon>lamiids</taxon>
        <taxon>Solanales</taxon>
        <taxon>Solanaceae</taxon>
        <taxon>Nicotianoideae</taxon>
        <taxon>Nicotianeae</taxon>
        <taxon>Nicotiana</taxon>
    </lineage>
</organism>
<dbReference type="EMBL" id="X52744">
    <property type="protein sequence ID" value="CAA36958.1"/>
    <property type="molecule type" value="mRNA"/>
</dbReference>
<dbReference type="PIR" id="S11722">
    <property type="entry name" value="CDNT40"/>
</dbReference>
<dbReference type="SMR" id="P27495"/>
<dbReference type="STRING" id="4097.P27495"/>
<dbReference type="PaxDb" id="4097-P27495"/>
<dbReference type="KEGG" id="nta:107772663"/>
<dbReference type="KEGG" id="nta:107773232"/>
<dbReference type="OMA" id="DSFWYGP"/>
<dbReference type="OrthoDB" id="1858299at2759"/>
<dbReference type="Proteomes" id="UP000084051">
    <property type="component" value="Unplaced"/>
</dbReference>
<dbReference type="GO" id="GO:0009535">
    <property type="term" value="C:chloroplast thylakoid membrane"/>
    <property type="evidence" value="ECO:0000318"/>
    <property type="project" value="GO_Central"/>
</dbReference>
<dbReference type="GO" id="GO:0009522">
    <property type="term" value="C:photosystem I"/>
    <property type="evidence" value="ECO:0007669"/>
    <property type="project" value="UniProtKB-KW"/>
</dbReference>
<dbReference type="GO" id="GO:0009523">
    <property type="term" value="C:photosystem II"/>
    <property type="evidence" value="ECO:0007669"/>
    <property type="project" value="UniProtKB-KW"/>
</dbReference>
<dbReference type="GO" id="GO:0016168">
    <property type="term" value="F:chlorophyll binding"/>
    <property type="evidence" value="ECO:0007669"/>
    <property type="project" value="UniProtKB-KW"/>
</dbReference>
<dbReference type="GO" id="GO:0046872">
    <property type="term" value="F:metal ion binding"/>
    <property type="evidence" value="ECO:0007669"/>
    <property type="project" value="UniProtKB-KW"/>
</dbReference>
<dbReference type="GO" id="GO:0009768">
    <property type="term" value="P:photosynthesis, light harvesting in photosystem I"/>
    <property type="evidence" value="ECO:0000318"/>
    <property type="project" value="GO_Central"/>
</dbReference>
<dbReference type="GO" id="GO:0009416">
    <property type="term" value="P:response to light stimulus"/>
    <property type="evidence" value="ECO:0000318"/>
    <property type="project" value="GO_Central"/>
</dbReference>
<dbReference type="FunFam" id="1.10.3460.10:FF:000001">
    <property type="entry name" value="Chlorophyll a-b binding protein, chloroplastic"/>
    <property type="match status" value="1"/>
</dbReference>
<dbReference type="Gene3D" id="1.10.3460.10">
    <property type="entry name" value="Chlorophyll a/b binding protein domain"/>
    <property type="match status" value="1"/>
</dbReference>
<dbReference type="InterPro" id="IPR001344">
    <property type="entry name" value="Chloro_AB-bd_pln"/>
</dbReference>
<dbReference type="InterPro" id="IPR022796">
    <property type="entry name" value="Chloroa_b-bind"/>
</dbReference>
<dbReference type="PANTHER" id="PTHR21649">
    <property type="entry name" value="CHLOROPHYLL A/B BINDING PROTEIN"/>
    <property type="match status" value="1"/>
</dbReference>
<dbReference type="Pfam" id="PF00504">
    <property type="entry name" value="Chloroa_b-bind"/>
    <property type="match status" value="1"/>
</dbReference>
<dbReference type="SUPFAM" id="SSF103511">
    <property type="entry name" value="Chlorophyll a-b binding protein"/>
    <property type="match status" value="1"/>
</dbReference>
<keyword id="KW-0007">Acetylation</keyword>
<keyword id="KW-0148">Chlorophyll</keyword>
<keyword id="KW-0150">Chloroplast</keyword>
<keyword id="KW-0157">Chromophore</keyword>
<keyword id="KW-0460">Magnesium</keyword>
<keyword id="KW-0472">Membrane</keyword>
<keyword id="KW-0479">Metal-binding</keyword>
<keyword id="KW-0597">Phosphoprotein</keyword>
<keyword id="KW-0602">Photosynthesis</keyword>
<keyword id="KW-0603">Photosystem I</keyword>
<keyword id="KW-0604">Photosystem II</keyword>
<keyword id="KW-0934">Plastid</keyword>
<keyword id="KW-1185">Reference proteome</keyword>
<keyword id="KW-0793">Thylakoid</keyword>
<keyword id="KW-0809">Transit peptide</keyword>
<keyword id="KW-0812">Transmembrane</keyword>
<keyword id="KW-1133">Transmembrane helix</keyword>
<accession>P27495</accession>